<protein>
    <recommendedName>
        <fullName evidence="1">Large ribosomal subunit protein uL30</fullName>
    </recommendedName>
    <alternativeName>
        <fullName evidence="2">50S ribosomal protein L30</fullName>
    </alternativeName>
</protein>
<feature type="chain" id="PRO_1000144644" description="Large ribosomal subunit protein uL30">
    <location>
        <begin position="1"/>
        <end position="59"/>
    </location>
</feature>
<organism>
    <name type="scientific">Aliivibrio salmonicida (strain LFI1238)</name>
    <name type="common">Vibrio salmonicida (strain LFI1238)</name>
    <dbReference type="NCBI Taxonomy" id="316275"/>
    <lineage>
        <taxon>Bacteria</taxon>
        <taxon>Pseudomonadati</taxon>
        <taxon>Pseudomonadota</taxon>
        <taxon>Gammaproteobacteria</taxon>
        <taxon>Vibrionales</taxon>
        <taxon>Vibrionaceae</taxon>
        <taxon>Aliivibrio</taxon>
    </lineage>
</organism>
<proteinExistence type="inferred from homology"/>
<gene>
    <name evidence="1" type="primary">rpmD</name>
    <name type="ordered locus">VSAL_I0338</name>
</gene>
<evidence type="ECO:0000255" key="1">
    <source>
        <dbReference type="HAMAP-Rule" id="MF_01371"/>
    </source>
</evidence>
<evidence type="ECO:0000305" key="2"/>
<reference key="1">
    <citation type="journal article" date="2008" name="BMC Genomics">
        <title>The genome sequence of the fish pathogen Aliivibrio salmonicida strain LFI1238 shows extensive evidence of gene decay.</title>
        <authorList>
            <person name="Hjerde E."/>
            <person name="Lorentzen M.S."/>
            <person name="Holden M.T."/>
            <person name="Seeger K."/>
            <person name="Paulsen S."/>
            <person name="Bason N."/>
            <person name="Churcher C."/>
            <person name="Harris D."/>
            <person name="Norbertczak H."/>
            <person name="Quail M.A."/>
            <person name="Sanders S."/>
            <person name="Thurston S."/>
            <person name="Parkhill J."/>
            <person name="Willassen N.P."/>
            <person name="Thomson N.R."/>
        </authorList>
    </citation>
    <scope>NUCLEOTIDE SEQUENCE [LARGE SCALE GENOMIC DNA]</scope>
    <source>
        <strain>LFI1238</strain>
    </source>
</reference>
<name>RL30_ALISL</name>
<sequence length="59" mass="6705">MSKTIKVTQTKSSIGRLPKHVLCLKGLGLRRINHTVELEDTACVRGMINKVHYMVKIEE</sequence>
<accession>B6EPU3</accession>
<dbReference type="EMBL" id="FM178379">
    <property type="protein sequence ID" value="CAQ78023.1"/>
    <property type="molecule type" value="Genomic_DNA"/>
</dbReference>
<dbReference type="RefSeq" id="WP_012549167.1">
    <property type="nucleotide sequence ID" value="NC_011312.1"/>
</dbReference>
<dbReference type="SMR" id="B6EPU3"/>
<dbReference type="KEGG" id="vsa:VSAL_I0338"/>
<dbReference type="eggNOG" id="COG1841">
    <property type="taxonomic scope" value="Bacteria"/>
</dbReference>
<dbReference type="HOGENOM" id="CLU_131047_1_4_6"/>
<dbReference type="Proteomes" id="UP000001730">
    <property type="component" value="Chromosome 1"/>
</dbReference>
<dbReference type="GO" id="GO:0022625">
    <property type="term" value="C:cytosolic large ribosomal subunit"/>
    <property type="evidence" value="ECO:0007669"/>
    <property type="project" value="TreeGrafter"/>
</dbReference>
<dbReference type="GO" id="GO:0003735">
    <property type="term" value="F:structural constituent of ribosome"/>
    <property type="evidence" value="ECO:0007669"/>
    <property type="project" value="InterPro"/>
</dbReference>
<dbReference type="GO" id="GO:0006412">
    <property type="term" value="P:translation"/>
    <property type="evidence" value="ECO:0007669"/>
    <property type="project" value="UniProtKB-UniRule"/>
</dbReference>
<dbReference type="CDD" id="cd01658">
    <property type="entry name" value="Ribosomal_L30"/>
    <property type="match status" value="1"/>
</dbReference>
<dbReference type="FunFam" id="3.30.1390.20:FF:000001">
    <property type="entry name" value="50S ribosomal protein L30"/>
    <property type="match status" value="1"/>
</dbReference>
<dbReference type="Gene3D" id="3.30.1390.20">
    <property type="entry name" value="Ribosomal protein L30, ferredoxin-like fold domain"/>
    <property type="match status" value="1"/>
</dbReference>
<dbReference type="HAMAP" id="MF_01371_B">
    <property type="entry name" value="Ribosomal_uL30_B"/>
    <property type="match status" value="1"/>
</dbReference>
<dbReference type="InterPro" id="IPR036919">
    <property type="entry name" value="Ribo_uL30_ferredoxin-like_sf"/>
</dbReference>
<dbReference type="InterPro" id="IPR005996">
    <property type="entry name" value="Ribosomal_uL30_bac-type"/>
</dbReference>
<dbReference type="InterPro" id="IPR016082">
    <property type="entry name" value="Ribosomal_uL30_ferredoxin-like"/>
</dbReference>
<dbReference type="NCBIfam" id="TIGR01308">
    <property type="entry name" value="rpmD_bact"/>
    <property type="match status" value="1"/>
</dbReference>
<dbReference type="PANTHER" id="PTHR15892:SF2">
    <property type="entry name" value="LARGE RIBOSOMAL SUBUNIT PROTEIN UL30M"/>
    <property type="match status" value="1"/>
</dbReference>
<dbReference type="PANTHER" id="PTHR15892">
    <property type="entry name" value="MITOCHONDRIAL RIBOSOMAL PROTEIN L30"/>
    <property type="match status" value="1"/>
</dbReference>
<dbReference type="Pfam" id="PF00327">
    <property type="entry name" value="Ribosomal_L30"/>
    <property type="match status" value="1"/>
</dbReference>
<dbReference type="PIRSF" id="PIRSF002211">
    <property type="entry name" value="Ribosomal_L30_bac-type"/>
    <property type="match status" value="1"/>
</dbReference>
<dbReference type="SUPFAM" id="SSF55129">
    <property type="entry name" value="Ribosomal protein L30p/L7e"/>
    <property type="match status" value="1"/>
</dbReference>
<comment type="subunit">
    <text evidence="1">Part of the 50S ribosomal subunit.</text>
</comment>
<comment type="similarity">
    <text evidence="1">Belongs to the universal ribosomal protein uL30 family.</text>
</comment>
<keyword id="KW-0687">Ribonucleoprotein</keyword>
<keyword id="KW-0689">Ribosomal protein</keyword>